<accession>Q9VV96</accession>
<accession>Q70PX1</accession>
<accession>Q70PX3</accession>
<accession>Q70PX5</accession>
<name>PGSB2_DROME</name>
<feature type="signal peptide" evidence="4">
    <location>
        <begin position="1"/>
        <end position="17"/>
    </location>
</feature>
<feature type="chain" id="PRO_0000023908" description="Peptidoglycan-recognition protein SB2">
    <location>
        <begin position="18"/>
        <end position="182"/>
    </location>
</feature>
<feature type="domain" description="N-acetylmuramoyl-L-alanine amidase" evidence="4">
    <location>
        <begin position="40"/>
        <end position="165"/>
    </location>
</feature>
<feature type="binding site" evidence="3">
    <location>
        <position position="47"/>
    </location>
    <ligand>
        <name>Zn(2+)</name>
        <dbReference type="ChEBI" id="CHEBI:29105"/>
    </ligand>
</feature>
<feature type="binding site" evidence="3">
    <location>
        <position position="155"/>
    </location>
    <ligand>
        <name>Zn(2+)</name>
        <dbReference type="ChEBI" id="CHEBI:29105"/>
    </ligand>
</feature>
<feature type="binding site" evidence="3">
    <location>
        <position position="163"/>
    </location>
    <ligand>
        <name>Zn(2+)</name>
        <dbReference type="ChEBI" id="CHEBI:29105"/>
    </ligand>
</feature>
<feature type="site" description="Important for catalytic activity; essential for amidase activity and zinc hydrate coordination" evidence="2">
    <location>
        <position position="81"/>
    </location>
</feature>
<feature type="glycosylation site" description="N-linked (GlcNAc...) asparagine" evidence="4">
    <location>
        <position position="149"/>
    </location>
</feature>
<feature type="disulfide bond" evidence="3">
    <location>
        <begin position="54"/>
        <end position="60"/>
    </location>
</feature>
<feature type="sequence variant" description="In strain: ZW141.">
    <original>A</original>
    <variation>V</variation>
    <location>
        <position position="15"/>
    </location>
</feature>
<feature type="sequence variant" description="In strain: Loua.">
    <original>T</original>
    <variation>A</variation>
    <location>
        <position position="51"/>
    </location>
</feature>
<feature type="sequence variant" description="In strain: ZW141.">
    <original>L</original>
    <variation>S</variation>
    <location>
        <position position="62"/>
    </location>
</feature>
<feature type="sequence variant" description="In strain: Draveil, Loua, Monty5, P.bourg, Tahiti, Texas and ZW141.">
    <original>V</original>
    <variation>L</variation>
    <location>
        <position position="152"/>
    </location>
</feature>
<proteinExistence type="evidence at transcript level"/>
<protein>
    <recommendedName>
        <fullName>Peptidoglycan-recognition protein SB2</fullName>
        <ecNumber>3.5.1.28</ecNumber>
    </recommendedName>
</protein>
<evidence type="ECO:0000250" key="1"/>
<evidence type="ECO:0000250" key="2">
    <source>
        <dbReference type="UniProtKB" id="P00806"/>
    </source>
</evidence>
<evidence type="ECO:0000250" key="3">
    <source>
        <dbReference type="UniProtKB" id="Q8INK6"/>
    </source>
</evidence>
<evidence type="ECO:0000255" key="4"/>
<evidence type="ECO:0000269" key="5">
    <source>
    </source>
</evidence>
<evidence type="ECO:0000305" key="6"/>
<keyword id="KW-1015">Disulfide bond</keyword>
<keyword id="KW-0325">Glycoprotein</keyword>
<keyword id="KW-0378">Hydrolase</keyword>
<keyword id="KW-0391">Immunity</keyword>
<keyword id="KW-0399">Innate immunity</keyword>
<keyword id="KW-0479">Metal-binding</keyword>
<keyword id="KW-1185">Reference proteome</keyword>
<keyword id="KW-0964">Secreted</keyword>
<keyword id="KW-0732">Signal</keyword>
<keyword id="KW-0862">Zinc</keyword>
<dbReference type="EC" id="3.5.1.28"/>
<dbReference type="EMBL" id="AJ556575">
    <property type="protein sequence ID" value="CAD89140.1"/>
    <property type="molecule type" value="Genomic_DNA"/>
</dbReference>
<dbReference type="EMBL" id="AJ556576">
    <property type="protein sequence ID" value="CAD89141.1"/>
    <property type="molecule type" value="Genomic_DNA"/>
</dbReference>
<dbReference type="EMBL" id="AJ556577">
    <property type="protein sequence ID" value="CAD89142.1"/>
    <property type="molecule type" value="Genomic_DNA"/>
</dbReference>
<dbReference type="EMBL" id="AJ556578">
    <property type="protein sequence ID" value="CAD89143.1"/>
    <property type="molecule type" value="Genomic_DNA"/>
</dbReference>
<dbReference type="EMBL" id="AJ556579">
    <property type="protein sequence ID" value="CAD89144.1"/>
    <property type="molecule type" value="Genomic_DNA"/>
</dbReference>
<dbReference type="EMBL" id="AJ556580">
    <property type="protein sequence ID" value="CAD89145.1"/>
    <property type="molecule type" value="Genomic_DNA"/>
</dbReference>
<dbReference type="EMBL" id="AJ556581">
    <property type="protein sequence ID" value="CAD89146.1"/>
    <property type="molecule type" value="Genomic_DNA"/>
</dbReference>
<dbReference type="EMBL" id="AJ556582">
    <property type="protein sequence ID" value="CAD89147.1"/>
    <property type="molecule type" value="Genomic_DNA"/>
</dbReference>
<dbReference type="EMBL" id="AJ556583">
    <property type="protein sequence ID" value="CAD89148.1"/>
    <property type="molecule type" value="Genomic_DNA"/>
</dbReference>
<dbReference type="EMBL" id="AJ556584">
    <property type="protein sequence ID" value="CAD89149.1"/>
    <property type="molecule type" value="Genomic_DNA"/>
</dbReference>
<dbReference type="EMBL" id="AJ556585">
    <property type="protein sequence ID" value="CAD89150.1"/>
    <property type="molecule type" value="Genomic_DNA"/>
</dbReference>
<dbReference type="EMBL" id="AE014296">
    <property type="protein sequence ID" value="AAF49421.1"/>
    <property type="molecule type" value="Genomic_DNA"/>
</dbReference>
<dbReference type="RefSeq" id="NP_648916.1">
    <property type="nucleotide sequence ID" value="NM_140659.3"/>
</dbReference>
<dbReference type="SMR" id="Q9VV96"/>
<dbReference type="FunCoup" id="Q9VV96">
    <property type="interactions" value="81"/>
</dbReference>
<dbReference type="GlyCosmos" id="Q9VV96">
    <property type="glycosylation" value="1 site, No reported glycans"/>
</dbReference>
<dbReference type="GlyGen" id="Q9VV96">
    <property type="glycosylation" value="1 site"/>
</dbReference>
<dbReference type="DNASU" id="39869"/>
<dbReference type="EnsemblMetazoa" id="FBtr0075320">
    <property type="protein sequence ID" value="FBpp0075079"/>
    <property type="gene ID" value="FBgn0043577"/>
</dbReference>
<dbReference type="GeneID" id="39869"/>
<dbReference type="KEGG" id="dme:Dmel_CG9697"/>
<dbReference type="UCSC" id="CG9697-RA">
    <property type="organism name" value="d. melanogaster"/>
</dbReference>
<dbReference type="AGR" id="FB:FBgn0043577"/>
<dbReference type="CTD" id="39869"/>
<dbReference type="FlyBase" id="FBgn0043577">
    <property type="gene designation" value="PGRP-SB2"/>
</dbReference>
<dbReference type="VEuPathDB" id="VectorBase:FBgn0043577"/>
<dbReference type="GeneTree" id="ENSGT00940000166535"/>
<dbReference type="HOGENOM" id="CLU_037559_3_2_1"/>
<dbReference type="InParanoid" id="Q9VV96"/>
<dbReference type="OrthoDB" id="10001926at2759"/>
<dbReference type="PhylomeDB" id="Q9VV96"/>
<dbReference type="BioGRID-ORCS" id="39869">
    <property type="hits" value="0 hits in 3 CRISPR screens"/>
</dbReference>
<dbReference type="GenomeRNAi" id="39869"/>
<dbReference type="PRO" id="PR:Q9VV96"/>
<dbReference type="Proteomes" id="UP000000803">
    <property type="component" value="Chromosome 3L"/>
</dbReference>
<dbReference type="Bgee" id="FBgn0043577">
    <property type="expression patterns" value="Expressed in saliva-secreting gland and 7 other cell types or tissues"/>
</dbReference>
<dbReference type="ExpressionAtlas" id="Q9VV96">
    <property type="expression patterns" value="baseline and differential"/>
</dbReference>
<dbReference type="GO" id="GO:0005576">
    <property type="term" value="C:extracellular region"/>
    <property type="evidence" value="ECO:0000314"/>
    <property type="project" value="UniProtKB"/>
</dbReference>
<dbReference type="GO" id="GO:0008745">
    <property type="term" value="F:N-acetylmuramoyl-L-alanine amidase activity"/>
    <property type="evidence" value="ECO:0000250"/>
    <property type="project" value="FlyBase"/>
</dbReference>
<dbReference type="GO" id="GO:0042834">
    <property type="term" value="F:peptidoglycan binding"/>
    <property type="evidence" value="ECO:0007669"/>
    <property type="project" value="InterPro"/>
</dbReference>
<dbReference type="GO" id="GO:0008270">
    <property type="term" value="F:zinc ion binding"/>
    <property type="evidence" value="ECO:0007669"/>
    <property type="project" value="InterPro"/>
</dbReference>
<dbReference type="GO" id="GO:0045087">
    <property type="term" value="P:innate immune response"/>
    <property type="evidence" value="ECO:0000303"/>
    <property type="project" value="UniProtKB"/>
</dbReference>
<dbReference type="GO" id="GO:0009253">
    <property type="term" value="P:peptidoglycan catabolic process"/>
    <property type="evidence" value="ECO:0000250"/>
    <property type="project" value="FlyBase"/>
</dbReference>
<dbReference type="CDD" id="cd06583">
    <property type="entry name" value="PGRP"/>
    <property type="match status" value="1"/>
</dbReference>
<dbReference type="FunFam" id="3.40.80.10:FF:000001">
    <property type="entry name" value="Peptidoglycan recognition protein 1"/>
    <property type="match status" value="1"/>
</dbReference>
<dbReference type="Gene3D" id="3.40.80.10">
    <property type="entry name" value="Peptidoglycan recognition protein-like"/>
    <property type="match status" value="1"/>
</dbReference>
<dbReference type="InterPro" id="IPR036505">
    <property type="entry name" value="Amidase/PGRP_sf"/>
</dbReference>
<dbReference type="InterPro" id="IPR002502">
    <property type="entry name" value="Amidase_domain"/>
</dbReference>
<dbReference type="InterPro" id="IPR017331">
    <property type="entry name" value="Peptidoglycan_recognition"/>
</dbReference>
<dbReference type="InterPro" id="IPR015510">
    <property type="entry name" value="PGRP"/>
</dbReference>
<dbReference type="InterPro" id="IPR006619">
    <property type="entry name" value="PGRP_domain_met/bac"/>
</dbReference>
<dbReference type="PANTHER" id="PTHR11022">
    <property type="entry name" value="PEPTIDOGLYCAN RECOGNITION PROTEIN"/>
    <property type="match status" value="1"/>
</dbReference>
<dbReference type="PANTHER" id="PTHR11022:SF75">
    <property type="entry name" value="PEPTIDOGLYCAN-RECOGNITION PROTEIN SB1-RELATED"/>
    <property type="match status" value="1"/>
</dbReference>
<dbReference type="Pfam" id="PF01510">
    <property type="entry name" value="Amidase_2"/>
    <property type="match status" value="1"/>
</dbReference>
<dbReference type="PIRSF" id="PIRSF037945">
    <property type="entry name" value="PGRPs"/>
    <property type="match status" value="1"/>
</dbReference>
<dbReference type="SMART" id="SM00644">
    <property type="entry name" value="Ami_2"/>
    <property type="match status" value="1"/>
</dbReference>
<dbReference type="SMART" id="SM00701">
    <property type="entry name" value="PGRP"/>
    <property type="match status" value="1"/>
</dbReference>
<dbReference type="SUPFAM" id="SSF55846">
    <property type="entry name" value="N-acetylmuramoyl-L-alanine amidase-like"/>
    <property type="match status" value="1"/>
</dbReference>
<sequence>MKLQLALVLCGLTLALGQIVPRSSWCPVPISPRMPRLMVPVRLIIIHHTVTAPCFNPHQCQLVLRQIRADHMRRKFRDIGYNFLIGGDGRIYEGLGFGIRGEHAPRYNSQSIGIAFIGNFQTGLPPSQMLQAARTLIQIAVQRRQVSPNYSVVGHCQTKATACPGIHLLNELKKWPNWRPKP</sequence>
<reference key="1">
    <citation type="journal article" date="2003" name="J. Mol. Evol.">
        <title>The evolution of parasite recognition genes in the innate immune system: purifying selection on Drosophila melanogaster peptidoglycan recognition proteins.</title>
        <authorList>
            <person name="Jiggins F.M."/>
            <person name="Hurst G.D.D."/>
        </authorList>
    </citation>
    <scope>NUCLEOTIDE SEQUENCE [GENOMIC DNA]</scope>
    <source>
        <strain>DI7</strain>
        <strain>Draveil</strain>
        <strain>KY024</strain>
        <strain>KY038</strain>
        <strain>Loua</strain>
        <strain>Monty5</strain>
        <strain>P.bourg</strain>
        <strain>S30</strain>
        <strain>Tahiti</strain>
        <strain>Texas</strain>
        <strain>ZW141</strain>
    </source>
</reference>
<reference key="2">
    <citation type="journal article" date="2000" name="Science">
        <title>The genome sequence of Drosophila melanogaster.</title>
        <authorList>
            <person name="Adams M.D."/>
            <person name="Celniker S.E."/>
            <person name="Holt R.A."/>
            <person name="Evans C.A."/>
            <person name="Gocayne J.D."/>
            <person name="Amanatides P.G."/>
            <person name="Scherer S.E."/>
            <person name="Li P.W."/>
            <person name="Hoskins R.A."/>
            <person name="Galle R.F."/>
            <person name="George R.A."/>
            <person name="Lewis S.E."/>
            <person name="Richards S."/>
            <person name="Ashburner M."/>
            <person name="Henderson S.N."/>
            <person name="Sutton G.G."/>
            <person name="Wortman J.R."/>
            <person name="Yandell M.D."/>
            <person name="Zhang Q."/>
            <person name="Chen L.X."/>
            <person name="Brandon R.C."/>
            <person name="Rogers Y.-H.C."/>
            <person name="Blazej R.G."/>
            <person name="Champe M."/>
            <person name="Pfeiffer B.D."/>
            <person name="Wan K.H."/>
            <person name="Doyle C."/>
            <person name="Baxter E.G."/>
            <person name="Helt G."/>
            <person name="Nelson C.R."/>
            <person name="Miklos G.L.G."/>
            <person name="Abril J.F."/>
            <person name="Agbayani A."/>
            <person name="An H.-J."/>
            <person name="Andrews-Pfannkoch C."/>
            <person name="Baldwin D."/>
            <person name="Ballew R.M."/>
            <person name="Basu A."/>
            <person name="Baxendale J."/>
            <person name="Bayraktaroglu L."/>
            <person name="Beasley E.M."/>
            <person name="Beeson K.Y."/>
            <person name="Benos P.V."/>
            <person name="Berman B.P."/>
            <person name="Bhandari D."/>
            <person name="Bolshakov S."/>
            <person name="Borkova D."/>
            <person name="Botchan M.R."/>
            <person name="Bouck J."/>
            <person name="Brokstein P."/>
            <person name="Brottier P."/>
            <person name="Burtis K.C."/>
            <person name="Busam D.A."/>
            <person name="Butler H."/>
            <person name="Cadieu E."/>
            <person name="Center A."/>
            <person name="Chandra I."/>
            <person name="Cherry J.M."/>
            <person name="Cawley S."/>
            <person name="Dahlke C."/>
            <person name="Davenport L.B."/>
            <person name="Davies P."/>
            <person name="de Pablos B."/>
            <person name="Delcher A."/>
            <person name="Deng Z."/>
            <person name="Mays A.D."/>
            <person name="Dew I."/>
            <person name="Dietz S.M."/>
            <person name="Dodson K."/>
            <person name="Doup L.E."/>
            <person name="Downes M."/>
            <person name="Dugan-Rocha S."/>
            <person name="Dunkov B.C."/>
            <person name="Dunn P."/>
            <person name="Durbin K.J."/>
            <person name="Evangelista C.C."/>
            <person name="Ferraz C."/>
            <person name="Ferriera S."/>
            <person name="Fleischmann W."/>
            <person name="Fosler C."/>
            <person name="Gabrielian A.E."/>
            <person name="Garg N.S."/>
            <person name="Gelbart W.M."/>
            <person name="Glasser K."/>
            <person name="Glodek A."/>
            <person name="Gong F."/>
            <person name="Gorrell J.H."/>
            <person name="Gu Z."/>
            <person name="Guan P."/>
            <person name="Harris M."/>
            <person name="Harris N.L."/>
            <person name="Harvey D.A."/>
            <person name="Heiman T.J."/>
            <person name="Hernandez J.R."/>
            <person name="Houck J."/>
            <person name="Hostin D."/>
            <person name="Houston K.A."/>
            <person name="Howland T.J."/>
            <person name="Wei M.-H."/>
            <person name="Ibegwam C."/>
            <person name="Jalali M."/>
            <person name="Kalush F."/>
            <person name="Karpen G.H."/>
            <person name="Ke Z."/>
            <person name="Kennison J.A."/>
            <person name="Ketchum K.A."/>
            <person name="Kimmel B.E."/>
            <person name="Kodira C.D."/>
            <person name="Kraft C.L."/>
            <person name="Kravitz S."/>
            <person name="Kulp D."/>
            <person name="Lai Z."/>
            <person name="Lasko P."/>
            <person name="Lei Y."/>
            <person name="Levitsky A.A."/>
            <person name="Li J.H."/>
            <person name="Li Z."/>
            <person name="Liang Y."/>
            <person name="Lin X."/>
            <person name="Liu X."/>
            <person name="Mattei B."/>
            <person name="McIntosh T.C."/>
            <person name="McLeod M.P."/>
            <person name="McPherson D."/>
            <person name="Merkulov G."/>
            <person name="Milshina N.V."/>
            <person name="Mobarry C."/>
            <person name="Morris J."/>
            <person name="Moshrefi A."/>
            <person name="Mount S.M."/>
            <person name="Moy M."/>
            <person name="Murphy B."/>
            <person name="Murphy L."/>
            <person name="Muzny D.M."/>
            <person name="Nelson D.L."/>
            <person name="Nelson D.R."/>
            <person name="Nelson K.A."/>
            <person name="Nixon K."/>
            <person name="Nusskern D.R."/>
            <person name="Pacleb J.M."/>
            <person name="Palazzolo M."/>
            <person name="Pittman G.S."/>
            <person name="Pan S."/>
            <person name="Pollard J."/>
            <person name="Puri V."/>
            <person name="Reese M.G."/>
            <person name="Reinert K."/>
            <person name="Remington K."/>
            <person name="Saunders R.D.C."/>
            <person name="Scheeler F."/>
            <person name="Shen H."/>
            <person name="Shue B.C."/>
            <person name="Siden-Kiamos I."/>
            <person name="Simpson M."/>
            <person name="Skupski M.P."/>
            <person name="Smith T.J."/>
            <person name="Spier E."/>
            <person name="Spradling A.C."/>
            <person name="Stapleton M."/>
            <person name="Strong R."/>
            <person name="Sun E."/>
            <person name="Svirskas R."/>
            <person name="Tector C."/>
            <person name="Turner R."/>
            <person name="Venter E."/>
            <person name="Wang A.H."/>
            <person name="Wang X."/>
            <person name="Wang Z.-Y."/>
            <person name="Wassarman D.A."/>
            <person name="Weinstock G.M."/>
            <person name="Weissenbach J."/>
            <person name="Williams S.M."/>
            <person name="Woodage T."/>
            <person name="Worley K.C."/>
            <person name="Wu D."/>
            <person name="Yang S."/>
            <person name="Yao Q.A."/>
            <person name="Ye J."/>
            <person name="Yeh R.-F."/>
            <person name="Zaveri J.S."/>
            <person name="Zhan M."/>
            <person name="Zhang G."/>
            <person name="Zhao Q."/>
            <person name="Zheng L."/>
            <person name="Zheng X.H."/>
            <person name="Zhong F.N."/>
            <person name="Zhong W."/>
            <person name="Zhou X."/>
            <person name="Zhu S.C."/>
            <person name="Zhu X."/>
            <person name="Smith H.O."/>
            <person name="Gibbs R.A."/>
            <person name="Myers E.W."/>
            <person name="Rubin G.M."/>
            <person name="Venter J.C."/>
        </authorList>
    </citation>
    <scope>NUCLEOTIDE SEQUENCE [LARGE SCALE GENOMIC DNA]</scope>
    <source>
        <strain>Berkeley</strain>
    </source>
</reference>
<reference key="3">
    <citation type="journal article" date="2002" name="Genome Biol.">
        <title>Annotation of the Drosophila melanogaster euchromatic genome: a systematic review.</title>
        <authorList>
            <person name="Misra S."/>
            <person name="Crosby M.A."/>
            <person name="Mungall C.J."/>
            <person name="Matthews B.B."/>
            <person name="Campbell K.S."/>
            <person name="Hradecky P."/>
            <person name="Huang Y."/>
            <person name="Kaminker J.S."/>
            <person name="Millburn G.H."/>
            <person name="Prochnik S.E."/>
            <person name="Smith C.D."/>
            <person name="Tupy J.L."/>
            <person name="Whitfield E.J."/>
            <person name="Bayraktaroglu L."/>
            <person name="Berman B.P."/>
            <person name="Bettencourt B.R."/>
            <person name="Celniker S.E."/>
            <person name="de Grey A.D.N.J."/>
            <person name="Drysdale R.A."/>
            <person name="Harris N.L."/>
            <person name="Richter J."/>
            <person name="Russo S."/>
            <person name="Schroeder A.J."/>
            <person name="Shu S.Q."/>
            <person name="Stapleton M."/>
            <person name="Yamada C."/>
            <person name="Ashburner M."/>
            <person name="Gelbart W.M."/>
            <person name="Rubin G.M."/>
            <person name="Lewis S.E."/>
        </authorList>
    </citation>
    <scope>GENOME REANNOTATION</scope>
    <source>
        <strain>Berkeley</strain>
    </source>
</reference>
<reference key="4">
    <citation type="journal article" date="2000" name="Proc. Natl. Acad. Sci. U.S.A.">
        <title>A family of peptidoglycan recognition proteins in the fruit fly Drosophila melanogaster.</title>
        <authorList>
            <person name="Werner T."/>
            <person name="Liu G."/>
            <person name="Kang D."/>
            <person name="Ekengren S."/>
            <person name="Steiner H."/>
            <person name="Hultmark D."/>
        </authorList>
    </citation>
    <scope>IDENTIFICATION</scope>
    <scope>DEVELOPMENTAL STAGE</scope>
</reference>
<comment type="function">
    <text evidence="1">N-acetylmuramyl-L-alanine amidase involved in innate immunity by degrading bacterial peptidoglycans (PGN). Probably plays a scavenger role by digesting biologically active PGN into biologically inactive fragments. Has no direct bacteriolytic activity (By similarity).</text>
</comment>
<comment type="catalytic activity">
    <reaction>
        <text>Hydrolyzes the link between N-acetylmuramoyl residues and L-amino acid residues in certain cell-wall glycopeptides.</text>
        <dbReference type="EC" id="3.5.1.28"/>
    </reaction>
</comment>
<comment type="cofactor">
    <cofactor evidence="3">
        <name>Zn(2+)</name>
        <dbReference type="ChEBI" id="CHEBI:29105"/>
    </cofactor>
</comment>
<comment type="subcellular location">
    <subcellularLocation>
        <location evidence="6">Secreted</location>
    </subcellularLocation>
</comment>
<comment type="developmental stage">
    <text evidence="5">Not expressed in adults.</text>
</comment>
<comment type="similarity">
    <text evidence="6">Belongs to the N-acetylmuramoyl-L-alanine amidase 2 family.</text>
</comment>
<organism>
    <name type="scientific">Drosophila melanogaster</name>
    <name type="common">Fruit fly</name>
    <dbReference type="NCBI Taxonomy" id="7227"/>
    <lineage>
        <taxon>Eukaryota</taxon>
        <taxon>Metazoa</taxon>
        <taxon>Ecdysozoa</taxon>
        <taxon>Arthropoda</taxon>
        <taxon>Hexapoda</taxon>
        <taxon>Insecta</taxon>
        <taxon>Pterygota</taxon>
        <taxon>Neoptera</taxon>
        <taxon>Endopterygota</taxon>
        <taxon>Diptera</taxon>
        <taxon>Brachycera</taxon>
        <taxon>Muscomorpha</taxon>
        <taxon>Ephydroidea</taxon>
        <taxon>Drosophilidae</taxon>
        <taxon>Drosophila</taxon>
        <taxon>Sophophora</taxon>
    </lineage>
</organism>
<gene>
    <name type="primary">PGRP-SB2</name>
    <name type="ORF">CG9697</name>
</gene>